<reference key="1">
    <citation type="journal article" date="2009" name="Nature">
        <title>Evolution of pathogenicity and sexual reproduction in eight Candida genomes.</title>
        <authorList>
            <person name="Butler G."/>
            <person name="Rasmussen M.D."/>
            <person name="Lin M.F."/>
            <person name="Santos M.A.S."/>
            <person name="Sakthikumar S."/>
            <person name="Munro C.A."/>
            <person name="Rheinbay E."/>
            <person name="Grabherr M."/>
            <person name="Forche A."/>
            <person name="Reedy J.L."/>
            <person name="Agrafioti I."/>
            <person name="Arnaud M.B."/>
            <person name="Bates S."/>
            <person name="Brown A.J.P."/>
            <person name="Brunke S."/>
            <person name="Costanzo M.C."/>
            <person name="Fitzpatrick D.A."/>
            <person name="de Groot P.W.J."/>
            <person name="Harris D."/>
            <person name="Hoyer L.L."/>
            <person name="Hube B."/>
            <person name="Klis F.M."/>
            <person name="Kodira C."/>
            <person name="Lennard N."/>
            <person name="Logue M.E."/>
            <person name="Martin R."/>
            <person name="Neiman A.M."/>
            <person name="Nikolaou E."/>
            <person name="Quail M.A."/>
            <person name="Quinn J."/>
            <person name="Santos M.C."/>
            <person name="Schmitzberger F.F."/>
            <person name="Sherlock G."/>
            <person name="Shah P."/>
            <person name="Silverstein K.A.T."/>
            <person name="Skrzypek M.S."/>
            <person name="Soll D."/>
            <person name="Staggs R."/>
            <person name="Stansfield I."/>
            <person name="Stumpf M.P.H."/>
            <person name="Sudbery P.E."/>
            <person name="Srikantha T."/>
            <person name="Zeng Q."/>
            <person name="Berman J."/>
            <person name="Berriman M."/>
            <person name="Heitman J."/>
            <person name="Gow N.A.R."/>
            <person name="Lorenz M.C."/>
            <person name="Birren B.W."/>
            <person name="Kellis M."/>
            <person name="Cuomo C.A."/>
        </authorList>
    </citation>
    <scope>NUCLEOTIDE SEQUENCE [LARGE SCALE GENOMIC DNA]</scope>
    <source>
        <strain>ATCC MYA-3404 / T1</strain>
    </source>
</reference>
<protein>
    <recommendedName>
        <fullName>ASTRA-associated protein 1</fullName>
    </recommendedName>
</protein>
<name>ASA1_CANTT</name>
<keyword id="KW-0156">Chromatin regulator</keyword>
<keyword id="KW-0539">Nucleus</keyword>
<keyword id="KW-1185">Reference proteome</keyword>
<keyword id="KW-0677">Repeat</keyword>
<keyword id="KW-0853">WD repeat</keyword>
<sequence length="356" mass="40438">MSQQFTLRSHNSSITFIYPSPTSSLHLYTADSTGLIIEWDLITRRPVITWQAHNDTILSMSTIHNHLLTHSRDNTIKIWNNTDCIMEIPCNSLNFSNVVVVHDEILITPASINSNNLDVYKITSDWQLTRLISDINVYQLVEKGIQFEEIGSRNDYGIIMKIHLVDNIIYVGFESGDIVGLELILPKPIVKENSNIDKLIINQSPKLIVKYHNSIHVPNPIISMSTFQDILVSGSTTNKIVIHKHPVEIIKVTHSGVQSIVNYKNENLIIGFWNGEIRYDENVIKRDVPMIQNNDNDDRSKSIKKLTFMTLLVPQKVESTTTGKNKYSQLIRGKKILTTDTLLVGYEDGSIVAYKV</sequence>
<proteinExistence type="inferred from homology"/>
<gene>
    <name type="primary">ASA1</name>
    <name type="ORF">CTRG_05413</name>
</gene>
<comment type="function">
    <text evidence="1">Component of the ASTRA complex involved in chromatin remodeling.</text>
</comment>
<comment type="subunit">
    <text evidence="1">Component of the ASTRA chromatin remodeling machinery complex.</text>
</comment>
<comment type="subcellular location">
    <subcellularLocation>
        <location evidence="1">Nucleus</location>
    </subcellularLocation>
</comment>
<comment type="similarity">
    <text evidence="2">Belongs to the WD repeat ASA1 family.</text>
</comment>
<accession>C5MH59</accession>
<dbReference type="EMBL" id="GG692402">
    <property type="protein sequence ID" value="EER30961.1"/>
    <property type="molecule type" value="Genomic_DNA"/>
</dbReference>
<dbReference type="RefSeq" id="XP_002551115.1">
    <property type="nucleotide sequence ID" value="XM_002551069.1"/>
</dbReference>
<dbReference type="SMR" id="C5MH59"/>
<dbReference type="STRING" id="294747.C5MH59"/>
<dbReference type="EnsemblFungi" id="CTRG_05413-t43_1">
    <property type="protein sequence ID" value="CTRG_05413-t43_1-p1"/>
    <property type="gene ID" value="CTRG_05413"/>
</dbReference>
<dbReference type="GeneID" id="8299738"/>
<dbReference type="KEGG" id="ctp:CTRG_05413"/>
<dbReference type="VEuPathDB" id="FungiDB:CTRG_05413"/>
<dbReference type="eggNOG" id="ENOG502QU4T">
    <property type="taxonomic scope" value="Eukaryota"/>
</dbReference>
<dbReference type="HOGENOM" id="CLU_045414_0_0_1"/>
<dbReference type="OrthoDB" id="7668193at2759"/>
<dbReference type="Proteomes" id="UP000002037">
    <property type="component" value="Unassembled WGS sequence"/>
</dbReference>
<dbReference type="GO" id="GO:0005634">
    <property type="term" value="C:nucleus"/>
    <property type="evidence" value="ECO:0007669"/>
    <property type="project" value="UniProtKB-SubCell"/>
</dbReference>
<dbReference type="GO" id="GO:0006325">
    <property type="term" value="P:chromatin organization"/>
    <property type="evidence" value="ECO:0007669"/>
    <property type="project" value="UniProtKB-KW"/>
</dbReference>
<dbReference type="Gene3D" id="2.130.10.10">
    <property type="entry name" value="YVTN repeat-like/Quinoprotein amine dehydrogenase"/>
    <property type="match status" value="1"/>
</dbReference>
<dbReference type="InterPro" id="IPR015943">
    <property type="entry name" value="WD40/YVTN_repeat-like_dom_sf"/>
</dbReference>
<dbReference type="InterPro" id="IPR036322">
    <property type="entry name" value="WD40_repeat_dom_sf"/>
</dbReference>
<dbReference type="InterPro" id="IPR001680">
    <property type="entry name" value="WD40_rpt"/>
</dbReference>
<dbReference type="Pfam" id="PF00400">
    <property type="entry name" value="WD40"/>
    <property type="match status" value="1"/>
</dbReference>
<dbReference type="SMART" id="SM00320">
    <property type="entry name" value="WD40"/>
    <property type="match status" value="3"/>
</dbReference>
<dbReference type="SUPFAM" id="SSF50978">
    <property type="entry name" value="WD40 repeat-like"/>
    <property type="match status" value="1"/>
</dbReference>
<dbReference type="PROSITE" id="PS50082">
    <property type="entry name" value="WD_REPEATS_2"/>
    <property type="match status" value="1"/>
</dbReference>
<dbReference type="PROSITE" id="PS50294">
    <property type="entry name" value="WD_REPEATS_REGION"/>
    <property type="match status" value="1"/>
</dbReference>
<feature type="chain" id="PRO_0000402208" description="ASTRA-associated protein 1">
    <location>
        <begin position="1"/>
        <end position="356"/>
    </location>
</feature>
<feature type="repeat" description="WD 1">
    <location>
        <begin position="9"/>
        <end position="49"/>
    </location>
</feature>
<feature type="repeat" description="WD 2">
    <location>
        <begin position="52"/>
        <end position="89"/>
    </location>
</feature>
<feature type="repeat" description="WD 3">
    <location>
        <begin position="210"/>
        <end position="242"/>
    </location>
</feature>
<feature type="repeat" description="WD 4">
    <location>
        <begin position="243"/>
        <end position="283"/>
    </location>
</feature>
<feature type="repeat" description="WD 5">
    <location>
        <begin position="317"/>
        <end position="356"/>
    </location>
</feature>
<organism>
    <name type="scientific">Candida tropicalis (strain ATCC MYA-3404 / T1)</name>
    <name type="common">Yeast</name>
    <dbReference type="NCBI Taxonomy" id="294747"/>
    <lineage>
        <taxon>Eukaryota</taxon>
        <taxon>Fungi</taxon>
        <taxon>Dikarya</taxon>
        <taxon>Ascomycota</taxon>
        <taxon>Saccharomycotina</taxon>
        <taxon>Pichiomycetes</taxon>
        <taxon>Debaryomycetaceae</taxon>
        <taxon>Candida/Lodderomyces clade</taxon>
        <taxon>Candida</taxon>
    </lineage>
</organism>
<evidence type="ECO:0000250" key="1"/>
<evidence type="ECO:0000305" key="2"/>